<gene>
    <name evidence="1" type="primary">rpsK</name>
    <name type="ordered locus">RHA1_ro06160</name>
</gene>
<dbReference type="EMBL" id="CP000431">
    <property type="protein sequence ID" value="ABG97937.1"/>
    <property type="molecule type" value="Genomic_DNA"/>
</dbReference>
<dbReference type="RefSeq" id="WP_009479376.1">
    <property type="nucleotide sequence ID" value="NC_008268.1"/>
</dbReference>
<dbReference type="SMR" id="Q0S3E9"/>
<dbReference type="KEGG" id="rha:RHA1_ro06160"/>
<dbReference type="eggNOG" id="COG0100">
    <property type="taxonomic scope" value="Bacteria"/>
</dbReference>
<dbReference type="HOGENOM" id="CLU_072439_5_0_11"/>
<dbReference type="OrthoDB" id="9806415at2"/>
<dbReference type="Proteomes" id="UP000008710">
    <property type="component" value="Chromosome"/>
</dbReference>
<dbReference type="GO" id="GO:1990904">
    <property type="term" value="C:ribonucleoprotein complex"/>
    <property type="evidence" value="ECO:0007669"/>
    <property type="project" value="UniProtKB-KW"/>
</dbReference>
<dbReference type="GO" id="GO:0005840">
    <property type="term" value="C:ribosome"/>
    <property type="evidence" value="ECO:0007669"/>
    <property type="project" value="UniProtKB-KW"/>
</dbReference>
<dbReference type="GO" id="GO:0019843">
    <property type="term" value="F:rRNA binding"/>
    <property type="evidence" value="ECO:0007669"/>
    <property type="project" value="UniProtKB-UniRule"/>
</dbReference>
<dbReference type="GO" id="GO:0003735">
    <property type="term" value="F:structural constituent of ribosome"/>
    <property type="evidence" value="ECO:0007669"/>
    <property type="project" value="InterPro"/>
</dbReference>
<dbReference type="GO" id="GO:0006412">
    <property type="term" value="P:translation"/>
    <property type="evidence" value="ECO:0007669"/>
    <property type="project" value="UniProtKB-UniRule"/>
</dbReference>
<dbReference type="FunFam" id="3.30.420.80:FF:000001">
    <property type="entry name" value="30S ribosomal protein S11"/>
    <property type="match status" value="1"/>
</dbReference>
<dbReference type="Gene3D" id="3.30.420.80">
    <property type="entry name" value="Ribosomal protein S11"/>
    <property type="match status" value="1"/>
</dbReference>
<dbReference type="HAMAP" id="MF_01310">
    <property type="entry name" value="Ribosomal_uS11"/>
    <property type="match status" value="1"/>
</dbReference>
<dbReference type="InterPro" id="IPR001971">
    <property type="entry name" value="Ribosomal_uS11"/>
</dbReference>
<dbReference type="InterPro" id="IPR019981">
    <property type="entry name" value="Ribosomal_uS11_bac-type"/>
</dbReference>
<dbReference type="InterPro" id="IPR018102">
    <property type="entry name" value="Ribosomal_uS11_CS"/>
</dbReference>
<dbReference type="InterPro" id="IPR036967">
    <property type="entry name" value="Ribosomal_uS11_sf"/>
</dbReference>
<dbReference type="NCBIfam" id="NF003698">
    <property type="entry name" value="PRK05309.1"/>
    <property type="match status" value="1"/>
</dbReference>
<dbReference type="NCBIfam" id="TIGR03632">
    <property type="entry name" value="uS11_bact"/>
    <property type="match status" value="1"/>
</dbReference>
<dbReference type="PANTHER" id="PTHR11759">
    <property type="entry name" value="40S RIBOSOMAL PROTEIN S14/30S RIBOSOMAL PROTEIN S11"/>
    <property type="match status" value="1"/>
</dbReference>
<dbReference type="Pfam" id="PF00411">
    <property type="entry name" value="Ribosomal_S11"/>
    <property type="match status" value="1"/>
</dbReference>
<dbReference type="PIRSF" id="PIRSF002131">
    <property type="entry name" value="Ribosomal_S11"/>
    <property type="match status" value="1"/>
</dbReference>
<dbReference type="SUPFAM" id="SSF53137">
    <property type="entry name" value="Translational machinery components"/>
    <property type="match status" value="1"/>
</dbReference>
<dbReference type="PROSITE" id="PS00054">
    <property type="entry name" value="RIBOSOMAL_S11"/>
    <property type="match status" value="1"/>
</dbReference>
<proteinExistence type="inferred from homology"/>
<protein>
    <recommendedName>
        <fullName evidence="1">Small ribosomal subunit protein uS11</fullName>
    </recommendedName>
    <alternativeName>
        <fullName evidence="3">30S ribosomal protein S11</fullName>
    </alternativeName>
</protein>
<sequence length="137" mass="14594">MPPKSRGTGPKKTQKARRRDKKNVPHGAAHIKSTFNNTIVSITDPAGNVISWASSGHVGFKGSRKSTPFAAQLAAENAARKAQEHGVKKVDVFVKGPGSGRETAIRSLQAAGLEVGTISDVTPQPHNGCRPPKRRRV</sequence>
<feature type="chain" id="PRO_0000294836" description="Small ribosomal subunit protein uS11">
    <location>
        <begin position="1"/>
        <end position="137"/>
    </location>
</feature>
<feature type="region of interest" description="Disordered" evidence="2">
    <location>
        <begin position="1"/>
        <end position="31"/>
    </location>
</feature>
<feature type="region of interest" description="Disordered" evidence="2">
    <location>
        <begin position="117"/>
        <end position="137"/>
    </location>
</feature>
<feature type="compositionally biased region" description="Basic residues" evidence="2">
    <location>
        <begin position="12"/>
        <end position="21"/>
    </location>
</feature>
<evidence type="ECO:0000255" key="1">
    <source>
        <dbReference type="HAMAP-Rule" id="MF_01310"/>
    </source>
</evidence>
<evidence type="ECO:0000256" key="2">
    <source>
        <dbReference type="SAM" id="MobiDB-lite"/>
    </source>
</evidence>
<evidence type="ECO:0000305" key="3"/>
<comment type="function">
    <text evidence="1">Located on the platform of the 30S subunit, it bridges several disparate RNA helices of the 16S rRNA. Forms part of the Shine-Dalgarno cleft in the 70S ribosome.</text>
</comment>
<comment type="subunit">
    <text evidence="1">Part of the 30S ribosomal subunit. Interacts with proteins S7 and S18. Binds to IF-3.</text>
</comment>
<comment type="similarity">
    <text evidence="1">Belongs to the universal ribosomal protein uS11 family.</text>
</comment>
<reference key="1">
    <citation type="journal article" date="2006" name="Proc. Natl. Acad. Sci. U.S.A.">
        <title>The complete genome of Rhodococcus sp. RHA1 provides insights into a catabolic powerhouse.</title>
        <authorList>
            <person name="McLeod M.P."/>
            <person name="Warren R.L."/>
            <person name="Hsiao W.W.L."/>
            <person name="Araki N."/>
            <person name="Myhre M."/>
            <person name="Fernandes C."/>
            <person name="Miyazawa D."/>
            <person name="Wong W."/>
            <person name="Lillquist A.L."/>
            <person name="Wang D."/>
            <person name="Dosanjh M."/>
            <person name="Hara H."/>
            <person name="Petrescu A."/>
            <person name="Morin R.D."/>
            <person name="Yang G."/>
            <person name="Stott J.M."/>
            <person name="Schein J.E."/>
            <person name="Shin H."/>
            <person name="Smailus D."/>
            <person name="Siddiqui A.S."/>
            <person name="Marra M.A."/>
            <person name="Jones S.J.M."/>
            <person name="Holt R."/>
            <person name="Brinkman F.S.L."/>
            <person name="Miyauchi K."/>
            <person name="Fukuda M."/>
            <person name="Davies J.E."/>
            <person name="Mohn W.W."/>
            <person name="Eltis L.D."/>
        </authorList>
    </citation>
    <scope>NUCLEOTIDE SEQUENCE [LARGE SCALE GENOMIC DNA]</scope>
    <source>
        <strain>RHA1</strain>
    </source>
</reference>
<keyword id="KW-0687">Ribonucleoprotein</keyword>
<keyword id="KW-0689">Ribosomal protein</keyword>
<keyword id="KW-0694">RNA-binding</keyword>
<keyword id="KW-0699">rRNA-binding</keyword>
<name>RS11_RHOJR</name>
<organism>
    <name type="scientific">Rhodococcus jostii (strain RHA1)</name>
    <dbReference type="NCBI Taxonomy" id="101510"/>
    <lineage>
        <taxon>Bacteria</taxon>
        <taxon>Bacillati</taxon>
        <taxon>Actinomycetota</taxon>
        <taxon>Actinomycetes</taxon>
        <taxon>Mycobacteriales</taxon>
        <taxon>Nocardiaceae</taxon>
        <taxon>Rhodococcus</taxon>
    </lineage>
</organism>
<accession>Q0S3E9</accession>